<comment type="catalytic activity">
    <reaction evidence="1">
        <text>L-citrulline + L-aspartate + ATP = 2-(N(omega)-L-arginino)succinate + AMP + diphosphate + H(+)</text>
        <dbReference type="Rhea" id="RHEA:10932"/>
        <dbReference type="ChEBI" id="CHEBI:15378"/>
        <dbReference type="ChEBI" id="CHEBI:29991"/>
        <dbReference type="ChEBI" id="CHEBI:30616"/>
        <dbReference type="ChEBI" id="CHEBI:33019"/>
        <dbReference type="ChEBI" id="CHEBI:57472"/>
        <dbReference type="ChEBI" id="CHEBI:57743"/>
        <dbReference type="ChEBI" id="CHEBI:456215"/>
        <dbReference type="EC" id="6.3.4.5"/>
    </reaction>
</comment>
<comment type="pathway">
    <text evidence="1">Amino-acid biosynthesis; L-arginine biosynthesis; L-arginine from L-ornithine and carbamoyl phosphate: step 2/3.</text>
</comment>
<comment type="subunit">
    <text evidence="1">Homotetramer.</text>
</comment>
<comment type="subcellular location">
    <subcellularLocation>
        <location evidence="1">Cytoplasm</location>
    </subcellularLocation>
</comment>
<comment type="similarity">
    <text evidence="1">Belongs to the argininosuccinate synthase family. Type 1 subfamily.</text>
</comment>
<dbReference type="EC" id="6.3.4.5" evidence="1"/>
<dbReference type="EMBL" id="AM711867">
    <property type="protein sequence ID" value="CAN02056.1"/>
    <property type="molecule type" value="Genomic_DNA"/>
</dbReference>
<dbReference type="RefSeq" id="WP_012038683.1">
    <property type="nucleotide sequence ID" value="NC_009480.1"/>
</dbReference>
<dbReference type="SMR" id="A5CSJ0"/>
<dbReference type="GeneID" id="92947989"/>
<dbReference type="KEGG" id="cmi:CMM_1996"/>
<dbReference type="eggNOG" id="COG0137">
    <property type="taxonomic scope" value="Bacteria"/>
</dbReference>
<dbReference type="HOGENOM" id="CLU_032784_4_2_11"/>
<dbReference type="OrthoDB" id="9801641at2"/>
<dbReference type="UniPathway" id="UPA00068">
    <property type="reaction ID" value="UER00113"/>
</dbReference>
<dbReference type="Proteomes" id="UP000001564">
    <property type="component" value="Chromosome"/>
</dbReference>
<dbReference type="GO" id="GO:0005737">
    <property type="term" value="C:cytoplasm"/>
    <property type="evidence" value="ECO:0007669"/>
    <property type="project" value="UniProtKB-SubCell"/>
</dbReference>
<dbReference type="GO" id="GO:0004055">
    <property type="term" value="F:argininosuccinate synthase activity"/>
    <property type="evidence" value="ECO:0007669"/>
    <property type="project" value="UniProtKB-UniRule"/>
</dbReference>
<dbReference type="GO" id="GO:0005524">
    <property type="term" value="F:ATP binding"/>
    <property type="evidence" value="ECO:0007669"/>
    <property type="project" value="UniProtKB-UniRule"/>
</dbReference>
<dbReference type="GO" id="GO:0000053">
    <property type="term" value="P:argininosuccinate metabolic process"/>
    <property type="evidence" value="ECO:0007669"/>
    <property type="project" value="TreeGrafter"/>
</dbReference>
<dbReference type="GO" id="GO:0006526">
    <property type="term" value="P:L-arginine biosynthetic process"/>
    <property type="evidence" value="ECO:0007669"/>
    <property type="project" value="UniProtKB-UniRule"/>
</dbReference>
<dbReference type="GO" id="GO:0000050">
    <property type="term" value="P:urea cycle"/>
    <property type="evidence" value="ECO:0007669"/>
    <property type="project" value="TreeGrafter"/>
</dbReference>
<dbReference type="CDD" id="cd01999">
    <property type="entry name" value="ASS"/>
    <property type="match status" value="1"/>
</dbReference>
<dbReference type="FunFam" id="3.40.50.620:FF:000038">
    <property type="entry name" value="Argininosuccinate synthase"/>
    <property type="match status" value="1"/>
</dbReference>
<dbReference type="FunFam" id="3.90.1260.10:FF:000007">
    <property type="entry name" value="Argininosuccinate synthase"/>
    <property type="match status" value="1"/>
</dbReference>
<dbReference type="Gene3D" id="3.90.1260.10">
    <property type="entry name" value="Argininosuccinate synthetase, chain A, domain 2"/>
    <property type="match status" value="1"/>
</dbReference>
<dbReference type="Gene3D" id="3.40.50.620">
    <property type="entry name" value="HUPs"/>
    <property type="match status" value="1"/>
</dbReference>
<dbReference type="Gene3D" id="1.20.5.470">
    <property type="entry name" value="Single helix bin"/>
    <property type="match status" value="1"/>
</dbReference>
<dbReference type="HAMAP" id="MF_00005">
    <property type="entry name" value="Arg_succ_synth_type1"/>
    <property type="match status" value="1"/>
</dbReference>
<dbReference type="InterPro" id="IPR048268">
    <property type="entry name" value="Arginosuc_syn_C"/>
</dbReference>
<dbReference type="InterPro" id="IPR048267">
    <property type="entry name" value="Arginosuc_syn_N"/>
</dbReference>
<dbReference type="InterPro" id="IPR001518">
    <property type="entry name" value="Arginosuc_synth"/>
</dbReference>
<dbReference type="InterPro" id="IPR018223">
    <property type="entry name" value="Arginosuc_synth_CS"/>
</dbReference>
<dbReference type="InterPro" id="IPR023434">
    <property type="entry name" value="Arginosuc_synth_type_1_subfam"/>
</dbReference>
<dbReference type="InterPro" id="IPR024074">
    <property type="entry name" value="AS_cat/multimer_dom_body"/>
</dbReference>
<dbReference type="InterPro" id="IPR014729">
    <property type="entry name" value="Rossmann-like_a/b/a_fold"/>
</dbReference>
<dbReference type="NCBIfam" id="TIGR00032">
    <property type="entry name" value="argG"/>
    <property type="match status" value="1"/>
</dbReference>
<dbReference type="NCBIfam" id="NF001770">
    <property type="entry name" value="PRK00509.1"/>
    <property type="match status" value="1"/>
</dbReference>
<dbReference type="PANTHER" id="PTHR11587">
    <property type="entry name" value="ARGININOSUCCINATE SYNTHASE"/>
    <property type="match status" value="1"/>
</dbReference>
<dbReference type="PANTHER" id="PTHR11587:SF2">
    <property type="entry name" value="ARGININOSUCCINATE SYNTHASE"/>
    <property type="match status" value="1"/>
</dbReference>
<dbReference type="Pfam" id="PF20979">
    <property type="entry name" value="Arginosuc_syn_C"/>
    <property type="match status" value="1"/>
</dbReference>
<dbReference type="Pfam" id="PF00764">
    <property type="entry name" value="Arginosuc_synth"/>
    <property type="match status" value="1"/>
</dbReference>
<dbReference type="SUPFAM" id="SSF52402">
    <property type="entry name" value="Adenine nucleotide alpha hydrolases-like"/>
    <property type="match status" value="1"/>
</dbReference>
<dbReference type="SUPFAM" id="SSF69864">
    <property type="entry name" value="Argininosuccinate synthetase, C-terminal domain"/>
    <property type="match status" value="1"/>
</dbReference>
<dbReference type="PROSITE" id="PS00564">
    <property type="entry name" value="ARGININOSUCCIN_SYN_1"/>
    <property type="match status" value="1"/>
</dbReference>
<dbReference type="PROSITE" id="PS00565">
    <property type="entry name" value="ARGININOSUCCIN_SYN_2"/>
    <property type="match status" value="1"/>
</dbReference>
<keyword id="KW-0028">Amino-acid biosynthesis</keyword>
<keyword id="KW-0055">Arginine biosynthesis</keyword>
<keyword id="KW-0067">ATP-binding</keyword>
<keyword id="KW-0963">Cytoplasm</keyword>
<keyword id="KW-0436">Ligase</keyword>
<keyword id="KW-0547">Nucleotide-binding</keyword>
<organism>
    <name type="scientific">Clavibacter michiganensis subsp. michiganensis (strain NCPPB 382)</name>
    <dbReference type="NCBI Taxonomy" id="443906"/>
    <lineage>
        <taxon>Bacteria</taxon>
        <taxon>Bacillati</taxon>
        <taxon>Actinomycetota</taxon>
        <taxon>Actinomycetes</taxon>
        <taxon>Micrococcales</taxon>
        <taxon>Microbacteriaceae</taxon>
        <taxon>Clavibacter</taxon>
    </lineage>
</organism>
<gene>
    <name evidence="1" type="primary">argG</name>
    <name type="ordered locus">CMM_1996</name>
</gene>
<protein>
    <recommendedName>
        <fullName evidence="1">Argininosuccinate synthase</fullName>
        <ecNumber evidence="1">6.3.4.5</ecNumber>
    </recommendedName>
    <alternativeName>
        <fullName evidence="1">Citrulline--aspartate ligase</fullName>
    </alternativeName>
</protein>
<name>ASSY_CLAM3</name>
<feature type="chain" id="PRO_1000000392" description="Argininosuccinate synthase">
    <location>
        <begin position="1"/>
        <end position="412"/>
    </location>
</feature>
<feature type="binding site" evidence="1">
    <location>
        <begin position="8"/>
        <end position="16"/>
    </location>
    <ligand>
        <name>ATP</name>
        <dbReference type="ChEBI" id="CHEBI:30616"/>
    </ligand>
</feature>
<feature type="binding site" evidence="1">
    <location>
        <position position="87"/>
    </location>
    <ligand>
        <name>L-citrulline</name>
        <dbReference type="ChEBI" id="CHEBI:57743"/>
    </ligand>
</feature>
<feature type="binding site" evidence="1">
    <location>
        <position position="117"/>
    </location>
    <ligand>
        <name>ATP</name>
        <dbReference type="ChEBI" id="CHEBI:30616"/>
    </ligand>
</feature>
<feature type="binding site" evidence="1">
    <location>
        <position position="119"/>
    </location>
    <ligand>
        <name>L-aspartate</name>
        <dbReference type="ChEBI" id="CHEBI:29991"/>
    </ligand>
</feature>
<feature type="binding site" evidence="1">
    <location>
        <position position="123"/>
    </location>
    <ligand>
        <name>L-aspartate</name>
        <dbReference type="ChEBI" id="CHEBI:29991"/>
    </ligand>
</feature>
<feature type="binding site" evidence="1">
    <location>
        <position position="123"/>
    </location>
    <ligand>
        <name>L-citrulline</name>
        <dbReference type="ChEBI" id="CHEBI:57743"/>
    </ligand>
</feature>
<feature type="binding site" evidence="1">
    <location>
        <position position="124"/>
    </location>
    <ligand>
        <name>L-aspartate</name>
        <dbReference type="ChEBI" id="CHEBI:29991"/>
    </ligand>
</feature>
<feature type="binding site" evidence="1">
    <location>
        <position position="127"/>
    </location>
    <ligand>
        <name>L-citrulline</name>
        <dbReference type="ChEBI" id="CHEBI:57743"/>
    </ligand>
</feature>
<feature type="binding site" evidence="1">
    <location>
        <position position="175"/>
    </location>
    <ligand>
        <name>L-citrulline</name>
        <dbReference type="ChEBI" id="CHEBI:57743"/>
    </ligand>
</feature>
<feature type="binding site" evidence="1">
    <location>
        <position position="259"/>
    </location>
    <ligand>
        <name>L-citrulline</name>
        <dbReference type="ChEBI" id="CHEBI:57743"/>
    </ligand>
</feature>
<feature type="binding site" evidence="1">
    <location>
        <position position="271"/>
    </location>
    <ligand>
        <name>L-citrulline</name>
        <dbReference type="ChEBI" id="CHEBI:57743"/>
    </ligand>
</feature>
<accession>A5CSJ0</accession>
<evidence type="ECO:0000255" key="1">
    <source>
        <dbReference type="HAMAP-Rule" id="MF_00005"/>
    </source>
</evidence>
<reference key="1">
    <citation type="journal article" date="2008" name="J. Bacteriol.">
        <title>The genome sequence of the tomato-pathogenic actinomycete Clavibacter michiganensis subsp. michiganensis NCPPB382 reveals a large island involved in pathogenicity.</title>
        <authorList>
            <person name="Gartemann K.-H."/>
            <person name="Abt B."/>
            <person name="Bekel T."/>
            <person name="Burger A."/>
            <person name="Engemann J."/>
            <person name="Fluegel M."/>
            <person name="Gaigalat L."/>
            <person name="Goesmann A."/>
            <person name="Graefen I."/>
            <person name="Kalinowski J."/>
            <person name="Kaup O."/>
            <person name="Kirchner O."/>
            <person name="Krause L."/>
            <person name="Linke B."/>
            <person name="McHardy A."/>
            <person name="Meyer F."/>
            <person name="Pohle S."/>
            <person name="Rueckert C."/>
            <person name="Schneiker S."/>
            <person name="Zellermann E.-M."/>
            <person name="Puehler A."/>
            <person name="Eichenlaub R."/>
            <person name="Kaiser O."/>
            <person name="Bartels D."/>
        </authorList>
    </citation>
    <scope>NUCLEOTIDE SEQUENCE [LARGE SCALE GENOMIC DNA]</scope>
    <source>
        <strain>NCPPB 382</strain>
    </source>
</reference>
<sequence length="412" mass="44825">MAERVVLAYSGGLDTSVGIGWLKDATGKEVVALAVDVGQGGEDMEVIRQRALDCGAVEAVVVDAKDEFADDYIVPALKANALYQKRYPLVSGLSRPLIAKHLARVAHELGANSVAHGCTGKGNDQVRFEAAVAALAPDLTSIAPVRDLALTRDKAIVYANEHDLPIEQSKKSPYSIDKNVWGRAVETGFLEDPWNGPIEDLYEYTQDPDVLRDATEVTITFEAGVPVAIDGVRYSPLRIVQELNAAAGAHGIGRIDVVEDRLVGIKSREVYEAPAAMTLIEAHEELESLTIERDLGRYKRGVEKDWANLVYDGLWFSGLKRSLDAFIEDSQRHVSGDIRMTLRGGRAVVTGRRSESSLYDFDLATYDTGDTFDQSLSKGFIELWSLPSKISARRDLAVEQAALAADPAPAAE</sequence>
<proteinExistence type="inferred from homology"/>